<keyword id="KW-0687">Ribonucleoprotein</keyword>
<keyword id="KW-0689">Ribosomal protein</keyword>
<keyword id="KW-0694">RNA-binding</keyword>
<keyword id="KW-0699">rRNA-binding</keyword>
<proteinExistence type="inferred from homology"/>
<sequence>MANIKSAKKRAIQSEKARKHNASRRSMMRTFIKKVYAAIEAGDKAAAQKAFNEMQPIVDRQAAKGLIHKNKAARHKANLTAQINKLA</sequence>
<organism>
    <name type="scientific">Escherichia coli O8 (strain IAI1)</name>
    <dbReference type="NCBI Taxonomy" id="585034"/>
    <lineage>
        <taxon>Bacteria</taxon>
        <taxon>Pseudomonadati</taxon>
        <taxon>Pseudomonadota</taxon>
        <taxon>Gammaproteobacteria</taxon>
        <taxon>Enterobacterales</taxon>
        <taxon>Enterobacteriaceae</taxon>
        <taxon>Escherichia</taxon>
    </lineage>
</organism>
<feature type="chain" id="PRO_1000126441" description="Small ribosomal subunit protein bS20">
    <location>
        <begin position="1"/>
        <end position="87"/>
    </location>
</feature>
<feature type="region of interest" description="Disordered" evidence="2">
    <location>
        <begin position="1"/>
        <end position="26"/>
    </location>
</feature>
<evidence type="ECO:0000255" key="1">
    <source>
        <dbReference type="HAMAP-Rule" id="MF_00500"/>
    </source>
</evidence>
<evidence type="ECO:0000256" key="2">
    <source>
        <dbReference type="SAM" id="MobiDB-lite"/>
    </source>
</evidence>
<evidence type="ECO:0000305" key="3"/>
<reference key="1">
    <citation type="journal article" date="2009" name="PLoS Genet.">
        <title>Organised genome dynamics in the Escherichia coli species results in highly diverse adaptive paths.</title>
        <authorList>
            <person name="Touchon M."/>
            <person name="Hoede C."/>
            <person name="Tenaillon O."/>
            <person name="Barbe V."/>
            <person name="Baeriswyl S."/>
            <person name="Bidet P."/>
            <person name="Bingen E."/>
            <person name="Bonacorsi S."/>
            <person name="Bouchier C."/>
            <person name="Bouvet O."/>
            <person name="Calteau A."/>
            <person name="Chiapello H."/>
            <person name="Clermont O."/>
            <person name="Cruveiller S."/>
            <person name="Danchin A."/>
            <person name="Diard M."/>
            <person name="Dossat C."/>
            <person name="Karoui M.E."/>
            <person name="Frapy E."/>
            <person name="Garry L."/>
            <person name="Ghigo J.M."/>
            <person name="Gilles A.M."/>
            <person name="Johnson J."/>
            <person name="Le Bouguenec C."/>
            <person name="Lescat M."/>
            <person name="Mangenot S."/>
            <person name="Martinez-Jehanne V."/>
            <person name="Matic I."/>
            <person name="Nassif X."/>
            <person name="Oztas S."/>
            <person name="Petit M.A."/>
            <person name="Pichon C."/>
            <person name="Rouy Z."/>
            <person name="Ruf C.S."/>
            <person name="Schneider D."/>
            <person name="Tourret J."/>
            <person name="Vacherie B."/>
            <person name="Vallenet D."/>
            <person name="Medigue C."/>
            <person name="Rocha E.P.C."/>
            <person name="Denamur E."/>
        </authorList>
    </citation>
    <scope>NUCLEOTIDE SEQUENCE [LARGE SCALE GENOMIC DNA]</scope>
    <source>
        <strain>IAI1</strain>
    </source>
</reference>
<protein>
    <recommendedName>
        <fullName evidence="1">Small ribosomal subunit protein bS20</fullName>
    </recommendedName>
    <alternativeName>
        <fullName evidence="3">30S ribosomal protein S20</fullName>
    </alternativeName>
</protein>
<dbReference type="EMBL" id="CU928160">
    <property type="protein sequence ID" value="CAQ96914.1"/>
    <property type="molecule type" value="Genomic_DNA"/>
</dbReference>
<dbReference type="RefSeq" id="WP_001274021.1">
    <property type="nucleotide sequence ID" value="NC_011741.1"/>
</dbReference>
<dbReference type="SMR" id="B7M0B9"/>
<dbReference type="GeneID" id="93777413"/>
<dbReference type="KEGG" id="ecr:ECIAI1_0024"/>
<dbReference type="HOGENOM" id="CLU_160655_4_0_6"/>
<dbReference type="GO" id="GO:0005829">
    <property type="term" value="C:cytosol"/>
    <property type="evidence" value="ECO:0007669"/>
    <property type="project" value="TreeGrafter"/>
</dbReference>
<dbReference type="GO" id="GO:0015935">
    <property type="term" value="C:small ribosomal subunit"/>
    <property type="evidence" value="ECO:0007669"/>
    <property type="project" value="TreeGrafter"/>
</dbReference>
<dbReference type="GO" id="GO:0070181">
    <property type="term" value="F:small ribosomal subunit rRNA binding"/>
    <property type="evidence" value="ECO:0007669"/>
    <property type="project" value="TreeGrafter"/>
</dbReference>
<dbReference type="GO" id="GO:0003735">
    <property type="term" value="F:structural constituent of ribosome"/>
    <property type="evidence" value="ECO:0007669"/>
    <property type="project" value="InterPro"/>
</dbReference>
<dbReference type="GO" id="GO:0006412">
    <property type="term" value="P:translation"/>
    <property type="evidence" value="ECO:0007669"/>
    <property type="project" value="UniProtKB-UniRule"/>
</dbReference>
<dbReference type="FunFam" id="1.20.58.110:FF:000001">
    <property type="entry name" value="30S ribosomal protein S20"/>
    <property type="match status" value="1"/>
</dbReference>
<dbReference type="Gene3D" id="1.20.58.110">
    <property type="entry name" value="Ribosomal protein S20"/>
    <property type="match status" value="1"/>
</dbReference>
<dbReference type="HAMAP" id="MF_00500">
    <property type="entry name" value="Ribosomal_bS20"/>
    <property type="match status" value="1"/>
</dbReference>
<dbReference type="InterPro" id="IPR002583">
    <property type="entry name" value="Ribosomal_bS20"/>
</dbReference>
<dbReference type="InterPro" id="IPR036510">
    <property type="entry name" value="Ribosomal_bS20_sf"/>
</dbReference>
<dbReference type="NCBIfam" id="TIGR00029">
    <property type="entry name" value="S20"/>
    <property type="match status" value="1"/>
</dbReference>
<dbReference type="PANTHER" id="PTHR33398">
    <property type="entry name" value="30S RIBOSOMAL PROTEIN S20"/>
    <property type="match status" value="1"/>
</dbReference>
<dbReference type="PANTHER" id="PTHR33398:SF1">
    <property type="entry name" value="SMALL RIBOSOMAL SUBUNIT PROTEIN BS20C"/>
    <property type="match status" value="1"/>
</dbReference>
<dbReference type="Pfam" id="PF01649">
    <property type="entry name" value="Ribosomal_S20p"/>
    <property type="match status" value="1"/>
</dbReference>
<dbReference type="SUPFAM" id="SSF46992">
    <property type="entry name" value="Ribosomal protein S20"/>
    <property type="match status" value="1"/>
</dbReference>
<comment type="function">
    <text evidence="1">Binds directly to 16S ribosomal RNA.</text>
</comment>
<comment type="similarity">
    <text evidence="1">Belongs to the bacterial ribosomal protein bS20 family.</text>
</comment>
<accession>B7M0B9</accession>
<gene>
    <name evidence="1" type="primary">rpsT</name>
    <name type="ordered locus">ECIAI1_0024</name>
</gene>
<name>RS20_ECO8A</name>